<name>ATPD_METC4</name>
<gene>
    <name evidence="1" type="primary">atpH</name>
    <name type="ordered locus">Mchl_1747</name>
</gene>
<feature type="chain" id="PRO_1000184749" description="ATP synthase subunit delta">
    <location>
        <begin position="1"/>
        <end position="189"/>
    </location>
</feature>
<protein>
    <recommendedName>
        <fullName evidence="1">ATP synthase subunit delta</fullName>
    </recommendedName>
    <alternativeName>
        <fullName evidence="1">ATP synthase F(1) sector subunit delta</fullName>
    </alternativeName>
    <alternativeName>
        <fullName evidence="1">F-type ATPase subunit delta</fullName>
        <shortName evidence="1">F-ATPase subunit delta</shortName>
    </alternativeName>
</protein>
<keyword id="KW-0066">ATP synthesis</keyword>
<keyword id="KW-0997">Cell inner membrane</keyword>
<keyword id="KW-1003">Cell membrane</keyword>
<keyword id="KW-0139">CF(1)</keyword>
<keyword id="KW-0375">Hydrogen ion transport</keyword>
<keyword id="KW-0406">Ion transport</keyword>
<keyword id="KW-0472">Membrane</keyword>
<keyword id="KW-0813">Transport</keyword>
<evidence type="ECO:0000255" key="1">
    <source>
        <dbReference type="HAMAP-Rule" id="MF_01416"/>
    </source>
</evidence>
<accession>B7KUA5</accession>
<reference key="1">
    <citation type="submission" date="2008-12" db="EMBL/GenBank/DDBJ databases">
        <title>Complete sequence of chromosome of Methylobacterium chloromethanicum CM4.</title>
        <authorList>
            <consortium name="US DOE Joint Genome Institute"/>
            <person name="Lucas S."/>
            <person name="Copeland A."/>
            <person name="Lapidus A."/>
            <person name="Glavina del Rio T."/>
            <person name="Dalin E."/>
            <person name="Tice H."/>
            <person name="Bruce D."/>
            <person name="Goodwin L."/>
            <person name="Pitluck S."/>
            <person name="Chertkov O."/>
            <person name="Brettin T."/>
            <person name="Detter J.C."/>
            <person name="Han C."/>
            <person name="Larimer F."/>
            <person name="Land M."/>
            <person name="Hauser L."/>
            <person name="Kyrpides N."/>
            <person name="Mikhailova N."/>
            <person name="Marx C."/>
            <person name="Richardson P."/>
        </authorList>
    </citation>
    <scope>NUCLEOTIDE SEQUENCE [LARGE SCALE GENOMIC DNA]</scope>
    <source>
        <strain>CM4 / NCIMB 13688</strain>
    </source>
</reference>
<dbReference type="EMBL" id="CP001298">
    <property type="protein sequence ID" value="ACK82610.1"/>
    <property type="molecule type" value="Genomic_DNA"/>
</dbReference>
<dbReference type="RefSeq" id="WP_003597668.1">
    <property type="nucleotide sequence ID" value="NC_011757.1"/>
</dbReference>
<dbReference type="SMR" id="B7KUA5"/>
<dbReference type="GeneID" id="72989127"/>
<dbReference type="KEGG" id="mch:Mchl_1747"/>
<dbReference type="HOGENOM" id="CLU_085114_0_1_5"/>
<dbReference type="Proteomes" id="UP000002385">
    <property type="component" value="Chromosome"/>
</dbReference>
<dbReference type="GO" id="GO:0005886">
    <property type="term" value="C:plasma membrane"/>
    <property type="evidence" value="ECO:0007669"/>
    <property type="project" value="UniProtKB-SubCell"/>
</dbReference>
<dbReference type="GO" id="GO:0045259">
    <property type="term" value="C:proton-transporting ATP synthase complex"/>
    <property type="evidence" value="ECO:0007669"/>
    <property type="project" value="UniProtKB-KW"/>
</dbReference>
<dbReference type="GO" id="GO:0046933">
    <property type="term" value="F:proton-transporting ATP synthase activity, rotational mechanism"/>
    <property type="evidence" value="ECO:0007669"/>
    <property type="project" value="UniProtKB-UniRule"/>
</dbReference>
<dbReference type="Gene3D" id="1.10.520.20">
    <property type="entry name" value="N-terminal domain of the delta subunit of the F1F0-ATP synthase"/>
    <property type="match status" value="1"/>
</dbReference>
<dbReference type="HAMAP" id="MF_01416">
    <property type="entry name" value="ATP_synth_delta_bact"/>
    <property type="match status" value="1"/>
</dbReference>
<dbReference type="InterPro" id="IPR026015">
    <property type="entry name" value="ATP_synth_OSCP/delta_N_sf"/>
</dbReference>
<dbReference type="InterPro" id="IPR020781">
    <property type="entry name" value="ATPase_OSCP/d_CS"/>
</dbReference>
<dbReference type="InterPro" id="IPR000711">
    <property type="entry name" value="ATPase_OSCP/dsu"/>
</dbReference>
<dbReference type="NCBIfam" id="TIGR01145">
    <property type="entry name" value="ATP_synt_delta"/>
    <property type="match status" value="1"/>
</dbReference>
<dbReference type="NCBIfam" id="NF004406">
    <property type="entry name" value="PRK05758.3-2"/>
    <property type="match status" value="1"/>
</dbReference>
<dbReference type="PANTHER" id="PTHR11910">
    <property type="entry name" value="ATP SYNTHASE DELTA CHAIN"/>
    <property type="match status" value="1"/>
</dbReference>
<dbReference type="Pfam" id="PF00213">
    <property type="entry name" value="OSCP"/>
    <property type="match status" value="1"/>
</dbReference>
<dbReference type="PRINTS" id="PR00125">
    <property type="entry name" value="ATPASEDELTA"/>
</dbReference>
<dbReference type="SUPFAM" id="SSF47928">
    <property type="entry name" value="N-terminal domain of the delta subunit of the F1F0-ATP synthase"/>
    <property type="match status" value="1"/>
</dbReference>
<dbReference type="PROSITE" id="PS00389">
    <property type="entry name" value="ATPASE_DELTA"/>
    <property type="match status" value="1"/>
</dbReference>
<proteinExistence type="inferred from homology"/>
<comment type="function">
    <text evidence="1">F(1)F(0) ATP synthase produces ATP from ADP in the presence of a proton or sodium gradient. F-type ATPases consist of two structural domains, F(1) containing the extramembraneous catalytic core and F(0) containing the membrane proton channel, linked together by a central stalk and a peripheral stalk. During catalysis, ATP synthesis in the catalytic domain of F(1) is coupled via a rotary mechanism of the central stalk subunits to proton translocation.</text>
</comment>
<comment type="function">
    <text evidence="1">This protein is part of the stalk that links CF(0) to CF(1). It either transmits conformational changes from CF(0) to CF(1) or is implicated in proton conduction.</text>
</comment>
<comment type="subunit">
    <text evidence="1">F-type ATPases have 2 components, F(1) - the catalytic core - and F(0) - the membrane proton channel. F(1) has five subunits: alpha(3), beta(3), gamma(1), delta(1), epsilon(1). F(0) has three main subunits: a(1), b(2) and c(10-14). The alpha and beta chains form an alternating ring which encloses part of the gamma chain. F(1) is attached to F(0) by a central stalk formed by the gamma and epsilon chains, while a peripheral stalk is formed by the delta and b chains.</text>
</comment>
<comment type="subcellular location">
    <subcellularLocation>
        <location evidence="1">Cell inner membrane</location>
        <topology evidence="1">Peripheral membrane protein</topology>
    </subcellularLocation>
</comment>
<comment type="similarity">
    <text evidence="1">Belongs to the ATPase delta chain family.</text>
</comment>
<sequence>MAQNGSEGPLLAGVAGRYALALYELAHDQGQVDDVAKNLDAFDALYRESDDLRRLVRSPAYSAAEQTAAVGALLDRAGISGLAANFIKLTAANRRLFALPGMIRAYREKVRESKGIIRAEVRVAEKPSDAVIEDIKASLRDVAKSEIDLDLHIDPSLIGGIVVKMGSRMVDASLRTKLNSIRLAMREAR</sequence>
<organism>
    <name type="scientific">Methylorubrum extorquens (strain CM4 / NCIMB 13688)</name>
    <name type="common">Methylobacterium extorquens</name>
    <dbReference type="NCBI Taxonomy" id="440085"/>
    <lineage>
        <taxon>Bacteria</taxon>
        <taxon>Pseudomonadati</taxon>
        <taxon>Pseudomonadota</taxon>
        <taxon>Alphaproteobacteria</taxon>
        <taxon>Hyphomicrobiales</taxon>
        <taxon>Methylobacteriaceae</taxon>
        <taxon>Methylorubrum</taxon>
    </lineage>
</organism>